<evidence type="ECO:0000255" key="1">
    <source>
        <dbReference type="HAMAP-Rule" id="MF_00016"/>
    </source>
</evidence>
<protein>
    <recommendedName>
        <fullName evidence="1">Holliday junction branch migration complex subunit RuvB</fullName>
        <ecNumber evidence="1">3.6.4.-</ecNumber>
    </recommendedName>
</protein>
<proteinExistence type="inferred from homology"/>
<dbReference type="EC" id="3.6.4.-" evidence="1"/>
<dbReference type="EMBL" id="CP001111">
    <property type="protein sequence ID" value="ACF52823.1"/>
    <property type="molecule type" value="Genomic_DNA"/>
</dbReference>
<dbReference type="RefSeq" id="WP_010481595.1">
    <property type="nucleotide sequence ID" value="NC_011071.1"/>
</dbReference>
<dbReference type="SMR" id="B4ST32"/>
<dbReference type="STRING" id="391008.Smal_3124"/>
<dbReference type="GeneID" id="86938363"/>
<dbReference type="KEGG" id="smt:Smal_3124"/>
<dbReference type="eggNOG" id="COG2255">
    <property type="taxonomic scope" value="Bacteria"/>
</dbReference>
<dbReference type="HOGENOM" id="CLU_055599_1_0_6"/>
<dbReference type="OrthoDB" id="9804478at2"/>
<dbReference type="Proteomes" id="UP000001867">
    <property type="component" value="Chromosome"/>
</dbReference>
<dbReference type="GO" id="GO:0005737">
    <property type="term" value="C:cytoplasm"/>
    <property type="evidence" value="ECO:0007669"/>
    <property type="project" value="UniProtKB-SubCell"/>
</dbReference>
<dbReference type="GO" id="GO:0048476">
    <property type="term" value="C:Holliday junction resolvase complex"/>
    <property type="evidence" value="ECO:0007669"/>
    <property type="project" value="UniProtKB-UniRule"/>
</dbReference>
<dbReference type="GO" id="GO:0005524">
    <property type="term" value="F:ATP binding"/>
    <property type="evidence" value="ECO:0007669"/>
    <property type="project" value="UniProtKB-UniRule"/>
</dbReference>
<dbReference type="GO" id="GO:0016887">
    <property type="term" value="F:ATP hydrolysis activity"/>
    <property type="evidence" value="ECO:0007669"/>
    <property type="project" value="InterPro"/>
</dbReference>
<dbReference type="GO" id="GO:0000400">
    <property type="term" value="F:four-way junction DNA binding"/>
    <property type="evidence" value="ECO:0007669"/>
    <property type="project" value="UniProtKB-UniRule"/>
</dbReference>
<dbReference type="GO" id="GO:0009378">
    <property type="term" value="F:four-way junction helicase activity"/>
    <property type="evidence" value="ECO:0007669"/>
    <property type="project" value="InterPro"/>
</dbReference>
<dbReference type="GO" id="GO:0006310">
    <property type="term" value="P:DNA recombination"/>
    <property type="evidence" value="ECO:0007669"/>
    <property type="project" value="UniProtKB-UniRule"/>
</dbReference>
<dbReference type="GO" id="GO:0006281">
    <property type="term" value="P:DNA repair"/>
    <property type="evidence" value="ECO:0007669"/>
    <property type="project" value="UniProtKB-UniRule"/>
</dbReference>
<dbReference type="CDD" id="cd00009">
    <property type="entry name" value="AAA"/>
    <property type="match status" value="1"/>
</dbReference>
<dbReference type="FunFam" id="3.40.50.300:FF:000073">
    <property type="entry name" value="Holliday junction ATP-dependent DNA helicase RuvB"/>
    <property type="match status" value="1"/>
</dbReference>
<dbReference type="Gene3D" id="1.10.8.60">
    <property type="match status" value="1"/>
</dbReference>
<dbReference type="Gene3D" id="3.40.50.300">
    <property type="entry name" value="P-loop containing nucleotide triphosphate hydrolases"/>
    <property type="match status" value="1"/>
</dbReference>
<dbReference type="Gene3D" id="1.10.10.10">
    <property type="entry name" value="Winged helix-like DNA-binding domain superfamily/Winged helix DNA-binding domain"/>
    <property type="match status" value="1"/>
</dbReference>
<dbReference type="HAMAP" id="MF_00016">
    <property type="entry name" value="DNA_HJ_migration_RuvB"/>
    <property type="match status" value="1"/>
</dbReference>
<dbReference type="InterPro" id="IPR003593">
    <property type="entry name" value="AAA+_ATPase"/>
</dbReference>
<dbReference type="InterPro" id="IPR041445">
    <property type="entry name" value="AAA_lid_4"/>
</dbReference>
<dbReference type="InterPro" id="IPR004605">
    <property type="entry name" value="DNA_helicase_Holl-junc_RuvB"/>
</dbReference>
<dbReference type="InterPro" id="IPR027417">
    <property type="entry name" value="P-loop_NTPase"/>
</dbReference>
<dbReference type="InterPro" id="IPR008824">
    <property type="entry name" value="RuvB-like_N"/>
</dbReference>
<dbReference type="InterPro" id="IPR008823">
    <property type="entry name" value="RuvB_C"/>
</dbReference>
<dbReference type="InterPro" id="IPR036388">
    <property type="entry name" value="WH-like_DNA-bd_sf"/>
</dbReference>
<dbReference type="InterPro" id="IPR036390">
    <property type="entry name" value="WH_DNA-bd_sf"/>
</dbReference>
<dbReference type="NCBIfam" id="NF000868">
    <property type="entry name" value="PRK00080.1"/>
    <property type="match status" value="1"/>
</dbReference>
<dbReference type="NCBIfam" id="TIGR00635">
    <property type="entry name" value="ruvB"/>
    <property type="match status" value="1"/>
</dbReference>
<dbReference type="PANTHER" id="PTHR42848">
    <property type="match status" value="1"/>
</dbReference>
<dbReference type="PANTHER" id="PTHR42848:SF1">
    <property type="entry name" value="HOLLIDAY JUNCTION BRANCH MIGRATION COMPLEX SUBUNIT RUVB"/>
    <property type="match status" value="1"/>
</dbReference>
<dbReference type="Pfam" id="PF17864">
    <property type="entry name" value="AAA_lid_4"/>
    <property type="match status" value="1"/>
</dbReference>
<dbReference type="Pfam" id="PF05491">
    <property type="entry name" value="RuvB_C"/>
    <property type="match status" value="1"/>
</dbReference>
<dbReference type="Pfam" id="PF05496">
    <property type="entry name" value="RuvB_N"/>
    <property type="match status" value="1"/>
</dbReference>
<dbReference type="SMART" id="SM00382">
    <property type="entry name" value="AAA"/>
    <property type="match status" value="1"/>
</dbReference>
<dbReference type="SUPFAM" id="SSF52540">
    <property type="entry name" value="P-loop containing nucleoside triphosphate hydrolases"/>
    <property type="match status" value="1"/>
</dbReference>
<dbReference type="SUPFAM" id="SSF46785">
    <property type="entry name" value="Winged helix' DNA-binding domain"/>
    <property type="match status" value="1"/>
</dbReference>
<comment type="function">
    <text evidence="1">The RuvA-RuvB-RuvC complex processes Holliday junction (HJ) DNA during genetic recombination and DNA repair, while the RuvA-RuvB complex plays an important role in the rescue of blocked DNA replication forks via replication fork reversal (RFR). RuvA specifically binds to HJ cruciform DNA, conferring on it an open structure. The RuvB hexamer acts as an ATP-dependent pump, pulling dsDNA into and through the RuvAB complex. RuvB forms 2 homohexamers on either side of HJ DNA bound by 1 or 2 RuvA tetramers; 4 subunits per hexamer contact DNA at a time. Coordinated motions by a converter formed by DNA-disengaged RuvB subunits stimulates ATP hydrolysis and nucleotide exchange. Immobilization of the converter enables RuvB to convert the ATP-contained energy into a lever motion, pulling 2 nucleotides of DNA out of the RuvA tetramer per ATP hydrolyzed, thus driving DNA branch migration. The RuvB motors rotate together with the DNA substrate, which together with the progressing nucleotide cycle form the mechanistic basis for DNA recombination by continuous HJ branch migration. Branch migration allows RuvC to scan DNA until it finds its consensus sequence, where it cleaves and resolves cruciform DNA.</text>
</comment>
<comment type="catalytic activity">
    <reaction evidence="1">
        <text>ATP + H2O = ADP + phosphate + H(+)</text>
        <dbReference type="Rhea" id="RHEA:13065"/>
        <dbReference type="ChEBI" id="CHEBI:15377"/>
        <dbReference type="ChEBI" id="CHEBI:15378"/>
        <dbReference type="ChEBI" id="CHEBI:30616"/>
        <dbReference type="ChEBI" id="CHEBI:43474"/>
        <dbReference type="ChEBI" id="CHEBI:456216"/>
    </reaction>
</comment>
<comment type="subunit">
    <text evidence="1">Homohexamer. Forms an RuvA(8)-RuvB(12)-Holliday junction (HJ) complex. HJ DNA is sandwiched between 2 RuvA tetramers; dsDNA enters through RuvA and exits via RuvB. An RuvB hexamer assembles on each DNA strand where it exits the tetramer. Each RuvB hexamer is contacted by two RuvA subunits (via domain III) on 2 adjacent RuvB subunits; this complex drives branch migration. In the full resolvosome a probable DNA-RuvA(4)-RuvB(12)-RuvC(2) complex forms which resolves the HJ.</text>
</comment>
<comment type="subcellular location">
    <subcellularLocation>
        <location evidence="1">Cytoplasm</location>
    </subcellularLocation>
</comment>
<comment type="domain">
    <text evidence="1">Has 3 domains, the large (RuvB-L) and small ATPase (RuvB-S) domains and the C-terminal head (RuvB-H) domain. The head domain binds DNA, while the ATPase domains jointly bind ATP, ADP or are empty depending on the state of the subunit in the translocation cycle. During a single DNA translocation step the structure of each domain remains the same, but their relative positions change.</text>
</comment>
<comment type="similarity">
    <text evidence="1">Belongs to the RuvB family.</text>
</comment>
<name>RUVB_STRM5</name>
<gene>
    <name evidence="1" type="primary">ruvB</name>
    <name type="ordered locus">Smal_3124</name>
</gene>
<sequence length="346" mass="37814">MTDDRIIGAGATREDDAADASIRPKRLADYLGQVPVREQMEIYIQAAKGRGDALDHVLIFGPPGLGKTTLSHVIANELGVALRVTSGPVIEKAGDLAALLTNLQPHDVLFIDEIHRLSPVVEEVLYPAMEDFQIDIMIGEGPAARSIKIDLPPFTLIGATTRAGLLTAPLRDRFGIVQRLEFYSVEELTRIVRRSAAILAIDCTADGAGEIARRARGTPRIANRLLRRVRDYAQVKAGGHIDEAVAQAAMKMLKVDPEGFDELDRRLLKTMVDYFDGGPVGIESLAAALSEERGTLEDVVEPYLIQQGFLVRTARGRMATHKAYRHMGLKPKNPPQDLFAEVPDVG</sequence>
<reference key="1">
    <citation type="submission" date="2008-06" db="EMBL/GenBank/DDBJ databases">
        <title>Complete sequence of Stenotrophomonas maltophilia R551-3.</title>
        <authorList>
            <consortium name="US DOE Joint Genome Institute"/>
            <person name="Lucas S."/>
            <person name="Copeland A."/>
            <person name="Lapidus A."/>
            <person name="Glavina del Rio T."/>
            <person name="Dalin E."/>
            <person name="Tice H."/>
            <person name="Pitluck S."/>
            <person name="Chain P."/>
            <person name="Malfatti S."/>
            <person name="Shin M."/>
            <person name="Vergez L."/>
            <person name="Lang D."/>
            <person name="Schmutz J."/>
            <person name="Larimer F."/>
            <person name="Land M."/>
            <person name="Hauser L."/>
            <person name="Kyrpides N."/>
            <person name="Mikhailova N."/>
            <person name="Taghavi S."/>
            <person name="Monchy S."/>
            <person name="Newman L."/>
            <person name="Vangronsveld J."/>
            <person name="van der Lelie D."/>
            <person name="Richardson P."/>
        </authorList>
    </citation>
    <scope>NUCLEOTIDE SEQUENCE [LARGE SCALE GENOMIC DNA]</scope>
    <source>
        <strain>R551-3</strain>
    </source>
</reference>
<keyword id="KW-0067">ATP-binding</keyword>
<keyword id="KW-0963">Cytoplasm</keyword>
<keyword id="KW-0227">DNA damage</keyword>
<keyword id="KW-0233">DNA recombination</keyword>
<keyword id="KW-0234">DNA repair</keyword>
<keyword id="KW-0238">DNA-binding</keyword>
<keyword id="KW-0378">Hydrolase</keyword>
<keyword id="KW-0547">Nucleotide-binding</keyword>
<organism>
    <name type="scientific">Stenotrophomonas maltophilia (strain R551-3)</name>
    <dbReference type="NCBI Taxonomy" id="391008"/>
    <lineage>
        <taxon>Bacteria</taxon>
        <taxon>Pseudomonadati</taxon>
        <taxon>Pseudomonadota</taxon>
        <taxon>Gammaproteobacteria</taxon>
        <taxon>Lysobacterales</taxon>
        <taxon>Lysobacteraceae</taxon>
        <taxon>Stenotrophomonas</taxon>
        <taxon>Stenotrophomonas maltophilia group</taxon>
    </lineage>
</organism>
<feature type="chain" id="PRO_1000089681" description="Holliday junction branch migration complex subunit RuvB">
    <location>
        <begin position="1"/>
        <end position="346"/>
    </location>
</feature>
<feature type="region of interest" description="Large ATPase domain (RuvB-L)" evidence="1">
    <location>
        <begin position="2"/>
        <end position="183"/>
    </location>
</feature>
<feature type="region of interest" description="Small ATPAse domain (RuvB-S)" evidence="1">
    <location>
        <begin position="184"/>
        <end position="254"/>
    </location>
</feature>
<feature type="region of interest" description="Head domain (RuvB-H)" evidence="1">
    <location>
        <begin position="257"/>
        <end position="346"/>
    </location>
</feature>
<feature type="binding site" evidence="1">
    <location>
        <position position="22"/>
    </location>
    <ligand>
        <name>ATP</name>
        <dbReference type="ChEBI" id="CHEBI:30616"/>
    </ligand>
</feature>
<feature type="binding site" evidence="1">
    <location>
        <position position="23"/>
    </location>
    <ligand>
        <name>ATP</name>
        <dbReference type="ChEBI" id="CHEBI:30616"/>
    </ligand>
</feature>
<feature type="binding site" evidence="1">
    <location>
        <position position="64"/>
    </location>
    <ligand>
        <name>ATP</name>
        <dbReference type="ChEBI" id="CHEBI:30616"/>
    </ligand>
</feature>
<feature type="binding site" evidence="1">
    <location>
        <position position="67"/>
    </location>
    <ligand>
        <name>ATP</name>
        <dbReference type="ChEBI" id="CHEBI:30616"/>
    </ligand>
</feature>
<feature type="binding site" evidence="1">
    <location>
        <position position="68"/>
    </location>
    <ligand>
        <name>ATP</name>
        <dbReference type="ChEBI" id="CHEBI:30616"/>
    </ligand>
</feature>
<feature type="binding site" evidence="1">
    <location>
        <position position="68"/>
    </location>
    <ligand>
        <name>Mg(2+)</name>
        <dbReference type="ChEBI" id="CHEBI:18420"/>
    </ligand>
</feature>
<feature type="binding site" evidence="1">
    <location>
        <position position="69"/>
    </location>
    <ligand>
        <name>ATP</name>
        <dbReference type="ChEBI" id="CHEBI:30616"/>
    </ligand>
</feature>
<feature type="binding site" evidence="1">
    <location>
        <begin position="130"/>
        <end position="132"/>
    </location>
    <ligand>
        <name>ATP</name>
        <dbReference type="ChEBI" id="CHEBI:30616"/>
    </ligand>
</feature>
<feature type="binding site" evidence="1">
    <location>
        <position position="173"/>
    </location>
    <ligand>
        <name>ATP</name>
        <dbReference type="ChEBI" id="CHEBI:30616"/>
    </ligand>
</feature>
<feature type="binding site" evidence="1">
    <location>
        <position position="183"/>
    </location>
    <ligand>
        <name>ATP</name>
        <dbReference type="ChEBI" id="CHEBI:30616"/>
    </ligand>
</feature>
<feature type="binding site" evidence="1">
    <location>
        <position position="220"/>
    </location>
    <ligand>
        <name>ATP</name>
        <dbReference type="ChEBI" id="CHEBI:30616"/>
    </ligand>
</feature>
<feature type="binding site" evidence="1">
    <location>
        <position position="293"/>
    </location>
    <ligand>
        <name>DNA</name>
        <dbReference type="ChEBI" id="CHEBI:16991"/>
    </ligand>
</feature>
<feature type="binding site" evidence="1">
    <location>
        <position position="312"/>
    </location>
    <ligand>
        <name>DNA</name>
        <dbReference type="ChEBI" id="CHEBI:16991"/>
    </ligand>
</feature>
<feature type="binding site" evidence="1">
    <location>
        <position position="317"/>
    </location>
    <ligand>
        <name>DNA</name>
        <dbReference type="ChEBI" id="CHEBI:16991"/>
    </ligand>
</feature>
<accession>B4ST32</accession>